<comment type="function">
    <text>Rod linker protein, associated with allophycocyanin. Linker polypeptides determine the state of aggregation and the location of the disk-shaped phycobiliprotein units within the phycobilisome and modulate their spectroscopic properties in order to mediate a directed and optimal energy transfer.</text>
</comment>
<comment type="subcellular location">
    <subcellularLocation>
        <location>Cellular thylakoid membrane</location>
        <topology>Peripheral membrane protein</topology>
        <orientation>Cytoplasmic side</orientation>
    </subcellularLocation>
    <text>This protein occurs in the rod, it is associated with allophycocyanin.</text>
</comment>
<comment type="similarity">
    <text evidence="2">Belongs to the phycobilisome linker protein family.</text>
</comment>
<name>PYC1_MICDP</name>
<accession>P16569</accession>
<reference key="1">
    <citation type="journal article" date="1988" name="J. Bacteriol.">
        <title>Genes encoding core components of the phycobilisome in the cyanobacterium Calothrix sp. strain PCC 7601: occurrence of a multigene family.</title>
        <authorList>
            <person name="Houmard J."/>
            <person name="Capuano V."/>
            <person name="Coursin T."/>
            <person name="Tandeau de Marsac N."/>
        </authorList>
    </citation>
    <scope>NUCLEOTIDE SEQUENCE [GENOMIC DNA]</scope>
</reference>
<evidence type="ECO:0000255" key="1">
    <source>
        <dbReference type="PROSITE-ProRule" id="PRU00771"/>
    </source>
</evidence>
<evidence type="ECO:0000305" key="2"/>
<feature type="chain" id="PRO_0000199236" description="Phycobilisome 7.8 kDa linker polypeptide, allophycocyanin-associated, core">
    <location>
        <begin position="1"/>
        <end position="68"/>
    </location>
</feature>
<feature type="domain" description="CpcD-like" evidence="1">
    <location>
        <begin position="2"/>
        <end position="57"/>
    </location>
</feature>
<keyword id="KW-0042">Antenna complex</keyword>
<keyword id="KW-0472">Membrane</keyword>
<keyword id="KW-0602">Photosynthesis</keyword>
<keyword id="KW-0605">Phycobilisome</keyword>
<keyword id="KW-0793">Thylakoid</keyword>
<gene>
    <name type="primary">apcC</name>
</gene>
<proteinExistence type="inferred from homology"/>
<protein>
    <recommendedName>
        <fullName>Phycobilisome 7.8 kDa linker polypeptide, allophycocyanin-associated, core</fullName>
    </recommendedName>
    <alternativeName>
        <fullName>LC 7.8</fullName>
    </alternativeName>
</protein>
<organism>
    <name type="scientific">Microchaete diplosiphon</name>
    <name type="common">Fremyella diplosiphon</name>
    <dbReference type="NCBI Taxonomy" id="1197"/>
    <lineage>
        <taxon>Bacteria</taxon>
        <taxon>Bacillati</taxon>
        <taxon>Cyanobacteriota</taxon>
        <taxon>Cyanophyceae</taxon>
        <taxon>Nostocales</taxon>
        <taxon>Rivulariaceae</taxon>
        <taxon>Microchaete</taxon>
    </lineage>
</organism>
<dbReference type="EMBL" id="M20806">
    <property type="protein sequence ID" value="AAA24876.1"/>
    <property type="molecule type" value="Genomic_DNA"/>
</dbReference>
<dbReference type="SMR" id="P16569"/>
<dbReference type="GO" id="GO:0030089">
    <property type="term" value="C:phycobilisome"/>
    <property type="evidence" value="ECO:0007669"/>
    <property type="project" value="UniProtKB-KW"/>
</dbReference>
<dbReference type="GO" id="GO:0031676">
    <property type="term" value="C:plasma membrane-derived thylakoid membrane"/>
    <property type="evidence" value="ECO:0007669"/>
    <property type="project" value="UniProtKB-SubCell"/>
</dbReference>
<dbReference type="GO" id="GO:0015979">
    <property type="term" value="P:photosynthesis"/>
    <property type="evidence" value="ECO:0007669"/>
    <property type="project" value="UniProtKB-KW"/>
</dbReference>
<dbReference type="Gene3D" id="3.30.1490.170">
    <property type="entry name" value="Allophycocyanin linker chain (domain)"/>
    <property type="match status" value="1"/>
</dbReference>
<dbReference type="InterPro" id="IPR011134">
    <property type="entry name" value="Allophyco_linker"/>
</dbReference>
<dbReference type="InterPro" id="IPR011064">
    <property type="entry name" value="Allophyco_linker_chain"/>
</dbReference>
<dbReference type="InterPro" id="IPR008213">
    <property type="entry name" value="CpcD-like_dom"/>
</dbReference>
<dbReference type="Pfam" id="PF01383">
    <property type="entry name" value="CpcD"/>
    <property type="match status" value="1"/>
</dbReference>
<dbReference type="PIRSF" id="PIRSF000083">
    <property type="entry name" value="Allophyco_linker"/>
    <property type="match status" value="1"/>
</dbReference>
<dbReference type="SMART" id="SM01094">
    <property type="entry name" value="CpcD"/>
    <property type="match status" value="1"/>
</dbReference>
<dbReference type="SUPFAM" id="SSF54580">
    <property type="entry name" value="Allophycocyanin linker chain (domain)"/>
    <property type="match status" value="1"/>
</dbReference>
<dbReference type="PROSITE" id="PS51441">
    <property type="entry name" value="CPCD_LIKE"/>
    <property type="match status" value="1"/>
</dbReference>
<sequence>MARLFKVTACVPSQTRIRTQRELQNTYFTKLVPFENWFREQQRIMKMGGKIVKVELATGKQGTNTGLL</sequence>